<keyword id="KW-1185">Reference proteome</keyword>
<keyword id="KW-0677">Repeat</keyword>
<keyword id="KW-0853">WD repeat</keyword>
<evidence type="ECO:0000305" key="1"/>
<organism>
    <name type="scientific">Dictyostelium discoideum</name>
    <name type="common">Social amoeba</name>
    <dbReference type="NCBI Taxonomy" id="44689"/>
    <lineage>
        <taxon>Eukaryota</taxon>
        <taxon>Amoebozoa</taxon>
        <taxon>Evosea</taxon>
        <taxon>Eumycetozoa</taxon>
        <taxon>Dictyostelia</taxon>
        <taxon>Dictyosteliales</taxon>
        <taxon>Dictyosteliaceae</taxon>
        <taxon>Dictyostelium</taxon>
    </lineage>
</organism>
<proteinExistence type="inferred from homology"/>
<reference key="1">
    <citation type="journal article" date="2002" name="Nature">
        <title>Sequence and analysis of chromosome 2 of Dictyostelium discoideum.</title>
        <authorList>
            <person name="Gloeckner G."/>
            <person name="Eichinger L."/>
            <person name="Szafranski K."/>
            <person name="Pachebat J.A."/>
            <person name="Bankier A.T."/>
            <person name="Dear P.H."/>
            <person name="Lehmann R."/>
            <person name="Baumgart C."/>
            <person name="Parra G."/>
            <person name="Abril J.F."/>
            <person name="Guigo R."/>
            <person name="Kumpf K."/>
            <person name="Tunggal B."/>
            <person name="Cox E.C."/>
            <person name="Quail M.A."/>
            <person name="Platzer M."/>
            <person name="Rosenthal A."/>
            <person name="Noegel A.A."/>
        </authorList>
    </citation>
    <scope>NUCLEOTIDE SEQUENCE [LARGE SCALE GENOMIC DNA]</scope>
    <source>
        <strain>AX4</strain>
    </source>
</reference>
<reference key="2">
    <citation type="journal article" date="2005" name="Nature">
        <title>The genome of the social amoeba Dictyostelium discoideum.</title>
        <authorList>
            <person name="Eichinger L."/>
            <person name="Pachebat J.A."/>
            <person name="Gloeckner G."/>
            <person name="Rajandream M.A."/>
            <person name="Sucgang R."/>
            <person name="Berriman M."/>
            <person name="Song J."/>
            <person name="Olsen R."/>
            <person name="Szafranski K."/>
            <person name="Xu Q."/>
            <person name="Tunggal B."/>
            <person name="Kummerfeld S."/>
            <person name="Madera M."/>
            <person name="Konfortov B.A."/>
            <person name="Rivero F."/>
            <person name="Bankier A.T."/>
            <person name="Lehmann R."/>
            <person name="Hamlin N."/>
            <person name="Davies R."/>
            <person name="Gaudet P."/>
            <person name="Fey P."/>
            <person name="Pilcher K."/>
            <person name="Chen G."/>
            <person name="Saunders D."/>
            <person name="Sodergren E.J."/>
            <person name="Davis P."/>
            <person name="Kerhornou A."/>
            <person name="Nie X."/>
            <person name="Hall N."/>
            <person name="Anjard C."/>
            <person name="Hemphill L."/>
            <person name="Bason N."/>
            <person name="Farbrother P."/>
            <person name="Desany B."/>
            <person name="Just E."/>
            <person name="Morio T."/>
            <person name="Rost R."/>
            <person name="Churcher C.M."/>
            <person name="Cooper J."/>
            <person name="Haydock S."/>
            <person name="van Driessche N."/>
            <person name="Cronin A."/>
            <person name="Goodhead I."/>
            <person name="Muzny D.M."/>
            <person name="Mourier T."/>
            <person name="Pain A."/>
            <person name="Lu M."/>
            <person name="Harper D."/>
            <person name="Lindsay R."/>
            <person name="Hauser H."/>
            <person name="James K.D."/>
            <person name="Quiles M."/>
            <person name="Madan Babu M."/>
            <person name="Saito T."/>
            <person name="Buchrieser C."/>
            <person name="Wardroper A."/>
            <person name="Felder M."/>
            <person name="Thangavelu M."/>
            <person name="Johnson D."/>
            <person name="Knights A."/>
            <person name="Loulseged H."/>
            <person name="Mungall K.L."/>
            <person name="Oliver K."/>
            <person name="Price C."/>
            <person name="Quail M.A."/>
            <person name="Urushihara H."/>
            <person name="Hernandez J."/>
            <person name="Rabbinowitsch E."/>
            <person name="Steffen D."/>
            <person name="Sanders M."/>
            <person name="Ma J."/>
            <person name="Kohara Y."/>
            <person name="Sharp S."/>
            <person name="Simmonds M.N."/>
            <person name="Spiegler S."/>
            <person name="Tivey A."/>
            <person name="Sugano S."/>
            <person name="White B."/>
            <person name="Walker D."/>
            <person name="Woodward J.R."/>
            <person name="Winckler T."/>
            <person name="Tanaka Y."/>
            <person name="Shaulsky G."/>
            <person name="Schleicher M."/>
            <person name="Weinstock G.M."/>
            <person name="Rosenthal A."/>
            <person name="Cox E.C."/>
            <person name="Chisholm R.L."/>
            <person name="Gibbs R.A."/>
            <person name="Loomis W.F."/>
            <person name="Platzer M."/>
            <person name="Kay R.R."/>
            <person name="Williams J.G."/>
            <person name="Dear P.H."/>
            <person name="Noegel A.A."/>
            <person name="Barrell B.G."/>
            <person name="Kuspa A."/>
        </authorList>
    </citation>
    <scope>NUCLEOTIDE SEQUENCE [LARGE SCALE GENOMIC DNA]</scope>
    <source>
        <strain>AX4</strain>
    </source>
</reference>
<comment type="similarity">
    <text evidence="1">Belongs to the WD repeat DCAF7 family.</text>
</comment>
<feature type="chain" id="PRO_0000328380" description="DDB1- and CUL4-associated factor 7 homolog">
    <location>
        <begin position="1"/>
        <end position="325"/>
    </location>
</feature>
<feature type="repeat" description="WD 1">
    <location>
        <begin position="62"/>
        <end position="104"/>
    </location>
</feature>
<feature type="repeat" description="WD 2">
    <location>
        <begin position="115"/>
        <end position="155"/>
    </location>
</feature>
<feature type="repeat" description="WD 3">
    <location>
        <begin position="158"/>
        <end position="197"/>
    </location>
</feature>
<feature type="repeat" description="WD 4">
    <location>
        <begin position="247"/>
        <end position="287"/>
    </location>
</feature>
<sequence>MEKKRIYTYNSPWVIYGLSWSSRVNRPFRLAIGSFLEDYTNRVDVIQLNEETDQFEVVCGFEHPYPPTKCMWIPDKNSNRPDLLATTGDYLRLWEVGSNQRSIKLKSLLTNVISEFCAPLSSFDWNETDPSLLATSSIDTTCTIWNIETGQAKTQLIAHDKEVFDIAFARGTDLFASVGADGSLRMFDLRNLEHSTIIYETPSFVPLLRLCWNKQDPNYLATIQQDSPKVIILDIRVPSVPAAELVFHKSAVNGISWAPHSSCHICTVSDDKQALIWDLSSMPKPIEDPLLTYNALAEINQLSWSSSQPDWIAIAFSSHLQILKV</sequence>
<gene>
    <name type="primary">wdr68</name>
    <name type="ORF">DDB_G0275925</name>
</gene>
<protein>
    <recommendedName>
        <fullName>DDB1- and CUL4-associated factor 7 homolog</fullName>
    </recommendedName>
    <alternativeName>
        <fullName>WD repeat-containing protein 68 homolog</fullName>
    </alternativeName>
</protein>
<accession>Q552R1</accession>
<dbReference type="EMBL" id="AAFI02000013">
    <property type="protein sequence ID" value="EAL69713.2"/>
    <property type="molecule type" value="Genomic_DNA"/>
</dbReference>
<dbReference type="RefSeq" id="XP_643620.2">
    <property type="nucleotide sequence ID" value="XM_638528.2"/>
</dbReference>
<dbReference type="SMR" id="Q552R1"/>
<dbReference type="FunCoup" id="Q552R1">
    <property type="interactions" value="533"/>
</dbReference>
<dbReference type="STRING" id="44689.Q552R1"/>
<dbReference type="PaxDb" id="44689-DDB0267164"/>
<dbReference type="EnsemblProtists" id="EAL69713">
    <property type="protein sequence ID" value="EAL69713"/>
    <property type="gene ID" value="DDB_G0275925"/>
</dbReference>
<dbReference type="GeneID" id="8620207"/>
<dbReference type="KEGG" id="ddi:DDB_G0275925"/>
<dbReference type="dictyBase" id="DDB_G0275925">
    <property type="gene designation" value="wdr68"/>
</dbReference>
<dbReference type="VEuPathDB" id="AmoebaDB:DDB_G0275925"/>
<dbReference type="eggNOG" id="KOG0290">
    <property type="taxonomic scope" value="Eukaryota"/>
</dbReference>
<dbReference type="HOGENOM" id="CLU_013694_0_0_1"/>
<dbReference type="InParanoid" id="Q552R1"/>
<dbReference type="OMA" id="TIAMDAC"/>
<dbReference type="PhylomeDB" id="Q552R1"/>
<dbReference type="Reactome" id="R-DDI-8951664">
    <property type="pathway name" value="Neddylation"/>
</dbReference>
<dbReference type="PRO" id="PR:Q552R1"/>
<dbReference type="Proteomes" id="UP000002195">
    <property type="component" value="Chromosome 2"/>
</dbReference>
<dbReference type="FunFam" id="2.130.10.10:FF:002733">
    <property type="entry name" value="DDB1- and CUL4-associated factor 7 homolog"/>
    <property type="match status" value="1"/>
</dbReference>
<dbReference type="Gene3D" id="2.130.10.10">
    <property type="entry name" value="YVTN repeat-like/Quinoprotein amine dehydrogenase"/>
    <property type="match status" value="1"/>
</dbReference>
<dbReference type="InterPro" id="IPR045159">
    <property type="entry name" value="DCAF7-like"/>
</dbReference>
<dbReference type="InterPro" id="IPR015943">
    <property type="entry name" value="WD40/YVTN_repeat-like_dom_sf"/>
</dbReference>
<dbReference type="InterPro" id="IPR019775">
    <property type="entry name" value="WD40_repeat_CS"/>
</dbReference>
<dbReference type="InterPro" id="IPR036322">
    <property type="entry name" value="WD40_repeat_dom_sf"/>
</dbReference>
<dbReference type="InterPro" id="IPR001680">
    <property type="entry name" value="WD40_rpt"/>
</dbReference>
<dbReference type="PANTHER" id="PTHR19919">
    <property type="entry name" value="WD REPEAT CONTAINING PROTEIN"/>
    <property type="match status" value="1"/>
</dbReference>
<dbReference type="Pfam" id="PF00400">
    <property type="entry name" value="WD40"/>
    <property type="match status" value="2"/>
</dbReference>
<dbReference type="SMART" id="SM00320">
    <property type="entry name" value="WD40"/>
    <property type="match status" value="4"/>
</dbReference>
<dbReference type="SUPFAM" id="SSF50978">
    <property type="entry name" value="WD40 repeat-like"/>
    <property type="match status" value="1"/>
</dbReference>
<dbReference type="PROSITE" id="PS00678">
    <property type="entry name" value="WD_REPEATS_1"/>
    <property type="match status" value="2"/>
</dbReference>
<dbReference type="PROSITE" id="PS50082">
    <property type="entry name" value="WD_REPEATS_2"/>
    <property type="match status" value="2"/>
</dbReference>
<dbReference type="PROSITE" id="PS50294">
    <property type="entry name" value="WD_REPEATS_REGION"/>
    <property type="match status" value="1"/>
</dbReference>
<name>DCAF7_DICDI</name>